<keyword id="KW-0025">Alternative splicing</keyword>
<keyword id="KW-0175">Coiled coil</keyword>
<keyword id="KW-0945">Host-virus interaction</keyword>
<keyword id="KW-0391">Immunity</keyword>
<keyword id="KW-0399">Innate immunity</keyword>
<keyword id="KW-0479">Metal-binding</keyword>
<keyword id="KW-0597">Phosphoprotein</keyword>
<keyword id="KW-1267">Proteomics identification</keyword>
<keyword id="KW-1185">Reference proteome</keyword>
<keyword id="KW-0862">Zinc</keyword>
<keyword id="KW-0863">Zinc-finger</keyword>
<protein>
    <recommendedName>
        <fullName>TANK-binding kinase 1-binding protein 1</fullName>
        <shortName>TBK1-binding protein 1</shortName>
    </recommendedName>
</protein>
<sequence>MESMFEDDISILTQEALGPSEVWLDSPGDPSLGGDMCSASHFALITAYGDIKERLGGLERENATLRRRLKVYEIKYPLISDFGEEHGFSLYEIKDGSLLEVEKVSLQQRLNQFQHELQKNKEQEEQLGEMIQAYEKLCVEKSDLETELREMRALVETHLRQICGLEQQLRQQQGLQDAAFSNLSPPPAPAPPCTDLDLHYLALRGGSGLSHAGWPGSTPSVSDLERRRLEEALEAAQGEARGAQLREEQLQAECERLQGELKQLQETRAQDLASNQSERDMAWVKRVGDDQVNLALAYTELTEELGRLRELSSLQGRILRTLLQEQARSGGQRHSPLSQRHSPAPQCPSPSPPARAAPPCPPCQSPVPQRRSPVPPCPSPQQRRSPASPSCPSPVPQRRSPVPPSCQSPSPQRRSPVPPSCPAPQPRPPPPPPPGERTLAERAYAKPPSHHVKAGFQGRRSYSELAEGAAYAGASPPWLQAEAATLPKPRAYGSELYGPGRPLSPRRAFEGIRLRFEKQPSEEDEWAVPTSPPSPEVGTIRCASFCAGFPIPESPAATAYAHAEHAQSWPSINLLMETVGSDIRSCPLCQLGFPVGYPDDALIKHIDSHLENSKI</sequence>
<evidence type="ECO:0000250" key="1"/>
<evidence type="ECO:0000255" key="2"/>
<evidence type="ECO:0000255" key="3">
    <source>
        <dbReference type="PROSITE-ProRule" id="PRU01253"/>
    </source>
</evidence>
<evidence type="ECO:0000256" key="4">
    <source>
        <dbReference type="SAM" id="MobiDB-lite"/>
    </source>
</evidence>
<evidence type="ECO:0000269" key="5">
    <source>
    </source>
</evidence>
<evidence type="ECO:0000269" key="6">
    <source>
    </source>
</evidence>
<evidence type="ECO:0000269" key="7">
    <source>
    </source>
</evidence>
<evidence type="ECO:0000269" key="8">
    <source>
    </source>
</evidence>
<evidence type="ECO:0000269" key="9">
    <source>
    </source>
</evidence>
<evidence type="ECO:0000269" key="10">
    <source>
    </source>
</evidence>
<evidence type="ECO:0000303" key="11">
    <source>
    </source>
</evidence>
<evidence type="ECO:0000305" key="12"/>
<evidence type="ECO:0000312" key="13">
    <source>
        <dbReference type="EMBL" id="AAI11419.1"/>
    </source>
</evidence>
<evidence type="ECO:0000312" key="14">
    <source>
        <dbReference type="EMBL" id="BAA34495.2"/>
    </source>
</evidence>
<evidence type="ECO:0007744" key="15">
    <source>
    </source>
</evidence>
<evidence type="ECO:0007744" key="16">
    <source>
    </source>
</evidence>
<evidence type="ECO:0007744" key="17">
    <source>
    </source>
</evidence>
<accession>A7MCY6</accession>
<accession>B2RZG6</accession>
<accession>O94873</accession>
<accession>Q14DW3</accession>
<gene>
    <name evidence="13" type="primary">TBKBP1</name>
    <name evidence="14" type="synonym">KIAA0775</name>
    <name type="synonym">SINTBAD</name>
</gene>
<reference evidence="12 14" key="1">
    <citation type="journal article" date="1998" name="DNA Res.">
        <title>Prediction of the coding sequences of unidentified human genes. XI. The complete sequences of 100 new cDNA clones from brain which code for large proteins in vitro.</title>
        <authorList>
            <person name="Nagase T."/>
            <person name="Ishikawa K."/>
            <person name="Suyama M."/>
            <person name="Kikuno R."/>
            <person name="Miyajima N."/>
            <person name="Tanaka A."/>
            <person name="Kotani H."/>
            <person name="Nomura N."/>
            <person name="Ohara O."/>
        </authorList>
    </citation>
    <scope>NUCLEOTIDE SEQUENCE [LARGE SCALE MRNA] (ISOFORM 1)</scope>
    <source>
        <tissue evidence="14">Brain</tissue>
    </source>
</reference>
<reference key="2">
    <citation type="submission" date="2004-01" db="EMBL/GenBank/DDBJ databases">
        <authorList>
            <person name="Ohara O."/>
            <person name="Suyama M."/>
            <person name="Nagase T."/>
            <person name="Ishikawa K."/>
            <person name="Kikuno R."/>
        </authorList>
    </citation>
    <scope>SEQUENCE REVISION</scope>
</reference>
<reference evidence="12 13" key="3">
    <citation type="journal article" date="2004" name="Genome Res.">
        <title>The status, quality, and expansion of the NIH full-length cDNA project: the Mammalian Gene Collection (MGC).</title>
        <authorList>
            <consortium name="The MGC Project Team"/>
        </authorList>
    </citation>
    <scope>NUCLEOTIDE SEQUENCE [LARGE SCALE MRNA] (ISOFORMS 1 AND 2)</scope>
</reference>
<reference key="4">
    <citation type="journal article" date="2004" name="Nat. Cell Biol.">
        <title>A physical and functional map of the human TNF-alpha/NF-kappa B signal transduction pathway.</title>
        <authorList>
            <person name="Bouwmeester T."/>
            <person name="Bauch A."/>
            <person name="Ruffner H."/>
            <person name="Angrand P.-O."/>
            <person name="Bergamini G."/>
            <person name="Croughton K."/>
            <person name="Cruciat C."/>
            <person name="Eberhard D."/>
            <person name="Gagneur J."/>
            <person name="Ghidelli S."/>
            <person name="Hopf C."/>
            <person name="Huhse B."/>
            <person name="Mangano R."/>
            <person name="Michon A.-M."/>
            <person name="Schirle M."/>
            <person name="Schlegl J."/>
            <person name="Schwab M."/>
            <person name="Stein M.A."/>
            <person name="Bauer A."/>
            <person name="Casari G."/>
            <person name="Drewes G."/>
            <person name="Gavin A.-C."/>
            <person name="Jackson D.B."/>
            <person name="Joberty G."/>
            <person name="Neubauer G."/>
            <person name="Rick J."/>
            <person name="Kuster B."/>
            <person name="Superti-Furga G."/>
        </authorList>
    </citation>
    <scope>IDENTIFICATION</scope>
</reference>
<reference key="5">
    <citation type="journal article" date="2007" name="EMBO J.">
        <title>SINTBAD, a novel component of innate antiviral immunity, shares a TBK1-binding domain with NAP1 and TANK.</title>
        <authorList>
            <person name="Ryzhakov G."/>
            <person name="Randow F."/>
        </authorList>
    </citation>
    <scope>INTERACTION WITH IKBKE</scope>
    <scope>TISSUE SPECIFICITY</scope>
</reference>
<reference key="6">
    <citation type="journal article" date="2009" name="Anal. Chem.">
        <title>Lys-N and trypsin cover complementary parts of the phosphoproteome in a refined SCX-based approach.</title>
        <authorList>
            <person name="Gauci S."/>
            <person name="Helbig A.O."/>
            <person name="Slijper M."/>
            <person name="Krijgsveld J."/>
            <person name="Heck A.J."/>
            <person name="Mohammed S."/>
        </authorList>
    </citation>
    <scope>IDENTIFICATION BY MASS SPECTROMETRY [LARGE SCALE ANALYSIS]</scope>
</reference>
<reference key="7">
    <citation type="journal article" date="2009" name="Mol. Cell. Proteomics">
        <title>Large-scale proteomics analysis of the human kinome.</title>
        <authorList>
            <person name="Oppermann F.S."/>
            <person name="Gnad F."/>
            <person name="Olsen J.V."/>
            <person name="Hornberger R."/>
            <person name="Greff Z."/>
            <person name="Keri G."/>
            <person name="Mann M."/>
            <person name="Daub H."/>
        </authorList>
    </citation>
    <scope>PHOSPHORYLATION [LARGE SCALE ANALYSIS] AT SER-184; SER-365; SER-372; SER-379; SER-385; SER-400; SER-415; SER-504 AND SER-534</scope>
    <scope>IDENTIFICATION BY MASS SPECTROMETRY [LARGE SCALE ANALYSIS]</scope>
</reference>
<reference key="8">
    <citation type="journal article" date="2011" name="PLoS ONE">
        <title>Functional dissection of the TBK1 molecular network.</title>
        <authorList>
            <person name="Goncalves A."/>
            <person name="Burckstummer T."/>
            <person name="Dixit E."/>
            <person name="Scheicher R."/>
            <person name="Gorna M.W."/>
            <person name="Karayel E."/>
            <person name="Sugar C."/>
            <person name="Stukalov A."/>
            <person name="Berg T."/>
            <person name="Kralovics R."/>
            <person name="Planyavsky M."/>
            <person name="Bennett K.L."/>
            <person name="Colinge J."/>
            <person name="Superti-Furga G."/>
        </authorList>
    </citation>
    <scope>FUNCTION</scope>
    <scope>INTERACTION WITH TBK1</scope>
</reference>
<reference key="9">
    <citation type="journal article" date="2011" name="PLoS Pathog.">
        <title>Vaccinia virus protein C6 is a virulence factor that binds TBK-1 adaptor proteins and inhibits activation of IRF3 and IRF7.</title>
        <authorList>
            <person name="Unterholzner L."/>
            <person name="Sumner R.P."/>
            <person name="Baran M."/>
            <person name="Ren H."/>
            <person name="Mansur D.S."/>
            <person name="Bourke N.M."/>
            <person name="Randow F."/>
            <person name="Smith G.L."/>
            <person name="Bowie A.G."/>
        </authorList>
    </citation>
    <scope>INTERACTION WITH VACCINIA VIRUS PROTEIN C6</scope>
</reference>
<reference key="10">
    <citation type="journal article" date="2013" name="J. Proteome Res.">
        <title>Toward a comprehensive characterization of a human cancer cell phosphoproteome.</title>
        <authorList>
            <person name="Zhou H."/>
            <person name="Di Palma S."/>
            <person name="Preisinger C."/>
            <person name="Peng M."/>
            <person name="Polat A.N."/>
            <person name="Heck A.J."/>
            <person name="Mohammed S."/>
        </authorList>
    </citation>
    <scope>PHOSPHORYLATION [LARGE SCALE ANALYSIS] AT SER-504</scope>
    <scope>IDENTIFICATION BY MASS SPECTROMETRY [LARGE SCALE ANALYSIS]</scope>
    <source>
        <tissue>Erythroleukemia</tissue>
    </source>
</reference>
<reference key="11">
    <citation type="journal article" date="2014" name="J. Proteomics">
        <title>An enzyme assisted RP-RPLC approach for in-depth analysis of human liver phosphoproteome.</title>
        <authorList>
            <person name="Bian Y."/>
            <person name="Song C."/>
            <person name="Cheng K."/>
            <person name="Dong M."/>
            <person name="Wang F."/>
            <person name="Huang J."/>
            <person name="Sun D."/>
            <person name="Wang L."/>
            <person name="Ye M."/>
            <person name="Zou H."/>
        </authorList>
    </citation>
    <scope>PHOSPHORYLATION [LARGE SCALE ANALYSIS] AT SER-400</scope>
    <scope>IDENTIFICATION BY MASS SPECTROMETRY [LARGE SCALE ANALYSIS]</scope>
    <source>
        <tissue>Liver</tissue>
    </source>
</reference>
<reference key="12">
    <citation type="journal article" date="2017" name="Biochem. J.">
        <title>DDX3 directly regulates TRAF3 ubiquitination and acts as a scaffold to co-ordinate assembly of signalling complexes downstream from MAVS.</title>
        <authorList>
            <person name="Gu L."/>
            <person name="Fullam A."/>
            <person name="McCormack N."/>
            <person name="Hoehn Y."/>
            <person name="Schroeder M."/>
        </authorList>
    </citation>
    <scope>INTERACTION WITH DDX3X</scope>
</reference>
<organism>
    <name type="scientific">Homo sapiens</name>
    <name type="common">Human</name>
    <dbReference type="NCBI Taxonomy" id="9606"/>
    <lineage>
        <taxon>Eukaryota</taxon>
        <taxon>Metazoa</taxon>
        <taxon>Chordata</taxon>
        <taxon>Craniata</taxon>
        <taxon>Vertebrata</taxon>
        <taxon>Euteleostomi</taxon>
        <taxon>Mammalia</taxon>
        <taxon>Eutheria</taxon>
        <taxon>Euarchontoglires</taxon>
        <taxon>Primates</taxon>
        <taxon>Haplorrhini</taxon>
        <taxon>Catarrhini</taxon>
        <taxon>Hominidae</taxon>
        <taxon>Homo</taxon>
    </lineage>
</organism>
<comment type="function">
    <text evidence="8">Adapter protein which constitutively binds TBK1 and IKBKE playing a role in antiviral innate immunity.</text>
</comment>
<comment type="subunit">
    <text evidence="6 8 9">Homodimer. May form a heterodimer with NAP1. Interacts with TKB1 and IKBKE. Weakly interacts with DDX3X (PubMed:27980081).</text>
</comment>
<comment type="subunit">
    <text evidence="7">(Microbial infection) Interacts with vaccinia virus protein C6 (PubMed:21931555).</text>
</comment>
<comment type="interaction">
    <interactant intactId="EBI-359969">
        <id>A7MCY6</id>
    </interactant>
    <interactant intactId="EBI-528269">
        <id>Q9UKV8</id>
        <label>AGO2</label>
    </interactant>
    <organismsDiffer>false</organismsDiffer>
    <experiments>2</experiments>
</comment>
<comment type="interaction">
    <interactant intactId="EBI-359969">
        <id>A7MCY6</id>
    </interactant>
    <interactant intactId="EBI-6115839">
        <id>O96018</id>
        <label>APBA3</label>
    </interactant>
    <organismsDiffer>false</organismsDiffer>
    <experiments>2</experiments>
</comment>
<comment type="interaction">
    <interactant intactId="EBI-359969">
        <id>A7MCY6</id>
    </interactant>
    <interactant intactId="EBI-307369">
        <id>Q14164</id>
        <label>IKBKE</label>
    </interactant>
    <organismsDiffer>false</organismsDiffer>
    <experiments>4</experiments>
</comment>
<comment type="interaction">
    <interactant intactId="EBI-359969">
        <id>A7MCY6</id>
    </interactant>
    <interactant intactId="EBI-1047793">
        <id>Q8TDY2</id>
        <label>RB1CC1</label>
    </interactant>
    <organismsDiffer>false</organismsDiffer>
    <experiments>2</experiments>
</comment>
<comment type="interaction">
    <interactant intactId="EBI-359969">
        <id>A7MCY6</id>
    </interactant>
    <interactant intactId="EBI-356402">
        <id>Q9UHD2</id>
        <label>TBK1</label>
    </interactant>
    <organismsDiffer>false</organismsDiffer>
    <experiments>9</experiments>
</comment>
<comment type="interaction">
    <interactant intactId="EBI-359969">
        <id>A7MCY6</id>
    </interactant>
    <interactant intactId="EBI-9519257">
        <id>P17362</id>
        <label>OPG029</label>
    </interactant>
    <organismsDiffer>true</organismsDiffer>
    <experiments>2</experiments>
</comment>
<comment type="alternative products">
    <event type="alternative splicing"/>
    <isoform>
        <id>A7MCY6-1</id>
        <name evidence="5 10">1</name>
        <sequence type="displayed"/>
    </isoform>
    <isoform>
        <id>A7MCY6-2</id>
        <name evidence="5">2</name>
        <sequence type="described" ref="VSP_052714 VSP_052715"/>
    </isoform>
</comment>
<comment type="tissue specificity">
    <text evidence="6">Detected in leukocytes, lung, placenta, small intestine, liver, kidney, spleen, muscle, heart, brain and at low levels in thymus.</text>
</comment>
<comment type="sequence caution" evidence="12">
    <conflict type="erroneous initiation">
        <sequence resource="EMBL-CDS" id="BAA34495"/>
    </conflict>
    <text>Extended N-terminus.</text>
</comment>
<proteinExistence type="evidence at protein level"/>
<feature type="chain" id="PRO_0000324654" description="TANK-binding kinase 1-binding protein 1">
    <location>
        <begin position="1"/>
        <end position="615"/>
    </location>
</feature>
<feature type="zinc finger region" description="UBZ1-type" evidence="3">
    <location>
        <begin position="583"/>
        <end position="609"/>
    </location>
</feature>
<feature type="region of interest" description="Homodimerization" evidence="1">
    <location>
        <begin position="1"/>
        <end position="279"/>
    </location>
</feature>
<feature type="region of interest" description="Interaction with TBK1 and IKBKE" evidence="1">
    <location>
        <begin position="280"/>
        <end position="329"/>
    </location>
</feature>
<feature type="region of interest" description="Disordered" evidence="4">
    <location>
        <begin position="326"/>
        <end position="458"/>
    </location>
</feature>
<feature type="coiled-coil region" evidence="2">
    <location>
        <begin position="48"/>
        <end position="162"/>
    </location>
</feature>
<feature type="coiled-coil region" evidence="2">
    <location>
        <begin position="221"/>
        <end position="276"/>
    </location>
</feature>
<feature type="compositionally biased region" description="Pro residues" evidence="4">
    <location>
        <begin position="345"/>
        <end position="365"/>
    </location>
</feature>
<feature type="compositionally biased region" description="Pro residues" evidence="4">
    <location>
        <begin position="389"/>
        <end position="406"/>
    </location>
</feature>
<feature type="compositionally biased region" description="Pro residues" evidence="4">
    <location>
        <begin position="416"/>
        <end position="435"/>
    </location>
</feature>
<feature type="binding site" evidence="3">
    <location>
        <position position="586"/>
    </location>
    <ligand>
        <name>Zn(2+)</name>
        <dbReference type="ChEBI" id="CHEBI:29105"/>
    </ligand>
</feature>
<feature type="binding site" evidence="3">
    <location>
        <position position="589"/>
    </location>
    <ligand>
        <name>Zn(2+)</name>
        <dbReference type="ChEBI" id="CHEBI:29105"/>
    </ligand>
</feature>
<feature type="binding site" evidence="3">
    <location>
        <position position="605"/>
    </location>
    <ligand>
        <name>Zn(2+)</name>
        <dbReference type="ChEBI" id="CHEBI:29105"/>
    </ligand>
</feature>
<feature type="binding site" evidence="3">
    <location>
        <position position="609"/>
    </location>
    <ligand>
        <name>Zn(2+)</name>
        <dbReference type="ChEBI" id="CHEBI:29105"/>
    </ligand>
</feature>
<feature type="modified residue" description="Phosphoserine" evidence="15">
    <location>
        <position position="184"/>
    </location>
</feature>
<feature type="modified residue" description="Phosphoserine" evidence="15">
    <location>
        <position position="365"/>
    </location>
</feature>
<feature type="modified residue" description="Phosphoserine" evidence="15">
    <location>
        <position position="372"/>
    </location>
</feature>
<feature type="modified residue" description="Phosphoserine" evidence="15">
    <location>
        <position position="379"/>
    </location>
</feature>
<feature type="modified residue" description="Phosphoserine" evidence="15">
    <location>
        <position position="385"/>
    </location>
</feature>
<feature type="modified residue" description="Phosphoserine" evidence="15 17">
    <location>
        <position position="400"/>
    </location>
</feature>
<feature type="modified residue" description="Phosphoserine" evidence="15">
    <location>
        <position position="415"/>
    </location>
</feature>
<feature type="modified residue" description="Phosphoserine" evidence="15 16">
    <location>
        <position position="504"/>
    </location>
</feature>
<feature type="modified residue" description="Phosphoserine" evidence="15">
    <location>
        <position position="534"/>
    </location>
</feature>
<feature type="splice variant" id="VSP_052714" description="In isoform 2." evidence="11">
    <original>PPAPAPPCTDLDLHYLALRGGSGLSHAGWPGSTPSVS</original>
    <variation>RRARAVLAVHQLADGDGGLRHPQLPPLPAGFPCRVPG</variation>
    <location>
        <begin position="186"/>
        <end position="222"/>
    </location>
</feature>
<feature type="splice variant" id="VSP_052715" description="In isoform 2." evidence="11">
    <location>
        <begin position="223"/>
        <end position="615"/>
    </location>
</feature>
<dbReference type="EMBL" id="AB018318">
    <property type="protein sequence ID" value="BAA34495.2"/>
    <property type="status" value="ALT_INIT"/>
    <property type="molecule type" value="mRNA"/>
</dbReference>
<dbReference type="EMBL" id="BC111418">
    <property type="protein sequence ID" value="AAI11419.1"/>
    <property type="molecule type" value="mRNA"/>
</dbReference>
<dbReference type="EMBL" id="BC152407">
    <property type="protein sequence ID" value="AAI52408.1"/>
    <property type="molecule type" value="mRNA"/>
</dbReference>
<dbReference type="EMBL" id="BC167150">
    <property type="protein sequence ID" value="AAI67150.1"/>
    <property type="molecule type" value="mRNA"/>
</dbReference>
<dbReference type="CCDS" id="CCDS45722.1">
    <molecule id="A7MCY6-1"/>
</dbReference>
<dbReference type="RefSeq" id="NP_001381684.1">
    <molecule id="A7MCY6-1"/>
    <property type="nucleotide sequence ID" value="NM_001394755.1"/>
</dbReference>
<dbReference type="RefSeq" id="NP_001381685.1">
    <molecule id="A7MCY6-1"/>
    <property type="nucleotide sequence ID" value="NM_001394756.1"/>
</dbReference>
<dbReference type="RefSeq" id="NP_055541.1">
    <molecule id="A7MCY6-1"/>
    <property type="nucleotide sequence ID" value="NM_014726.2"/>
</dbReference>
<dbReference type="RefSeq" id="XP_005257916.1">
    <property type="nucleotide sequence ID" value="XM_005257859.4"/>
</dbReference>
<dbReference type="RefSeq" id="XP_005257917.1">
    <molecule id="A7MCY6-1"/>
    <property type="nucleotide sequence ID" value="XM_005257860.5"/>
</dbReference>
<dbReference type="RefSeq" id="XP_005257918.1">
    <molecule id="A7MCY6-1"/>
    <property type="nucleotide sequence ID" value="XM_005257861.5"/>
</dbReference>
<dbReference type="RefSeq" id="XP_005257919.1">
    <property type="nucleotide sequence ID" value="XM_005257862.3"/>
</dbReference>
<dbReference type="RefSeq" id="XP_054173947.1">
    <molecule id="A7MCY6-1"/>
    <property type="nucleotide sequence ID" value="XM_054317972.1"/>
</dbReference>
<dbReference type="RefSeq" id="XP_054173948.1">
    <molecule id="A7MCY6-1"/>
    <property type="nucleotide sequence ID" value="XM_054317973.1"/>
</dbReference>
<dbReference type="SMR" id="A7MCY6"/>
<dbReference type="BioGRID" id="115103">
    <property type="interactions" value="81"/>
</dbReference>
<dbReference type="ComplexPortal" id="CPX-6090">
    <property type="entry name" value="TBK1-IKKepsilon-SINTBAD complex"/>
</dbReference>
<dbReference type="CORUM" id="A7MCY6"/>
<dbReference type="DIP" id="DIP-27604N"/>
<dbReference type="FunCoup" id="A7MCY6">
    <property type="interactions" value="289"/>
</dbReference>
<dbReference type="IntAct" id="A7MCY6">
    <property type="interactions" value="27"/>
</dbReference>
<dbReference type="MINT" id="A7MCY6"/>
<dbReference type="STRING" id="9606.ENSP00000354777"/>
<dbReference type="ChEMBL" id="CHEMBL4523108"/>
<dbReference type="GlyGen" id="A7MCY6">
    <property type="glycosylation" value="1 site"/>
</dbReference>
<dbReference type="iPTMnet" id="A7MCY6"/>
<dbReference type="PhosphoSitePlus" id="A7MCY6"/>
<dbReference type="BioMuta" id="TBKBP1"/>
<dbReference type="jPOST" id="A7MCY6"/>
<dbReference type="MassIVE" id="A7MCY6"/>
<dbReference type="PaxDb" id="9606-ENSP00000354777"/>
<dbReference type="PeptideAtlas" id="A7MCY6"/>
<dbReference type="ProteomicsDB" id="1810">
    <molecule id="A7MCY6-1"/>
</dbReference>
<dbReference type="ProteomicsDB" id="1811">
    <molecule id="A7MCY6-2"/>
</dbReference>
<dbReference type="Pumba" id="A7MCY6"/>
<dbReference type="Antibodypedia" id="30174">
    <property type="antibodies" value="154 antibodies from 26 providers"/>
</dbReference>
<dbReference type="DNASU" id="9755"/>
<dbReference type="Ensembl" id="ENST00000361722.7">
    <molecule id="A7MCY6-1"/>
    <property type="protein sequence ID" value="ENSP00000354777.3"/>
    <property type="gene ID" value="ENSG00000198933.11"/>
</dbReference>
<dbReference type="Ensembl" id="ENST00000578982.6">
    <molecule id="A7MCY6-1"/>
    <property type="protein sequence ID" value="ENSP00000462339.2"/>
    <property type="gene ID" value="ENSG00000198933.11"/>
</dbReference>
<dbReference type="GeneID" id="9755"/>
<dbReference type="KEGG" id="hsa:9755"/>
<dbReference type="MANE-Select" id="ENST00000578982.6">
    <property type="protein sequence ID" value="ENSP00000462339.2"/>
    <property type="RefSeq nucleotide sequence ID" value="NM_001394755.1"/>
    <property type="RefSeq protein sequence ID" value="NP_001381684.1"/>
</dbReference>
<dbReference type="UCSC" id="uc002ilu.4">
    <molecule id="A7MCY6-1"/>
    <property type="organism name" value="human"/>
</dbReference>
<dbReference type="AGR" id="HGNC:30140"/>
<dbReference type="CTD" id="9755"/>
<dbReference type="DisGeNET" id="9755"/>
<dbReference type="GeneCards" id="TBKBP1"/>
<dbReference type="HGNC" id="HGNC:30140">
    <property type="gene designation" value="TBKBP1"/>
</dbReference>
<dbReference type="HPA" id="ENSG00000198933">
    <property type="expression patterns" value="Low tissue specificity"/>
</dbReference>
<dbReference type="MIM" id="608476">
    <property type="type" value="gene"/>
</dbReference>
<dbReference type="neXtProt" id="NX_A7MCY6"/>
<dbReference type="OpenTargets" id="ENSG00000198933"/>
<dbReference type="PharmGKB" id="PA142670830"/>
<dbReference type="VEuPathDB" id="HostDB:ENSG00000198933"/>
<dbReference type="eggNOG" id="ENOG502QVP4">
    <property type="taxonomic scope" value="Eukaryota"/>
</dbReference>
<dbReference type="GeneTree" id="ENSGT00940000153704"/>
<dbReference type="HOGENOM" id="CLU_029090_0_0_1"/>
<dbReference type="InParanoid" id="A7MCY6"/>
<dbReference type="OMA" id="CHPQQGY"/>
<dbReference type="OrthoDB" id="8796075at2759"/>
<dbReference type="PAN-GO" id="A7MCY6">
    <property type="GO annotations" value="2 GO annotations based on evolutionary models"/>
</dbReference>
<dbReference type="PhylomeDB" id="A7MCY6"/>
<dbReference type="TreeFam" id="TF331289"/>
<dbReference type="PathwayCommons" id="A7MCY6"/>
<dbReference type="SignaLink" id="A7MCY6"/>
<dbReference type="SIGNOR" id="A7MCY6"/>
<dbReference type="BioGRID-ORCS" id="9755">
    <property type="hits" value="31 hits in 1162 CRISPR screens"/>
</dbReference>
<dbReference type="CD-CODE" id="E8F4C1F2">
    <property type="entry name" value="Sint speckle"/>
</dbReference>
<dbReference type="GenomeRNAi" id="9755"/>
<dbReference type="Pharos" id="A7MCY6">
    <property type="development level" value="Tbio"/>
</dbReference>
<dbReference type="PRO" id="PR:A7MCY6"/>
<dbReference type="Proteomes" id="UP000005640">
    <property type="component" value="Chromosome 17"/>
</dbReference>
<dbReference type="RNAct" id="A7MCY6">
    <property type="molecule type" value="protein"/>
</dbReference>
<dbReference type="Bgee" id="ENSG00000198933">
    <property type="expression patterns" value="Expressed in cingulate cortex and 121 other cell types or tissues"/>
</dbReference>
<dbReference type="ExpressionAtlas" id="A7MCY6">
    <property type="expression patterns" value="baseline and differential"/>
</dbReference>
<dbReference type="GO" id="GO:0005737">
    <property type="term" value="C:cytoplasm"/>
    <property type="evidence" value="ECO:0000318"/>
    <property type="project" value="GO_Central"/>
</dbReference>
<dbReference type="GO" id="GO:1902554">
    <property type="term" value="C:serine/threonine protein kinase complex"/>
    <property type="evidence" value="ECO:0000303"/>
    <property type="project" value="ComplexPortal"/>
</dbReference>
<dbReference type="GO" id="GO:0008270">
    <property type="term" value="F:zinc ion binding"/>
    <property type="evidence" value="ECO:0007669"/>
    <property type="project" value="UniProtKB-KW"/>
</dbReference>
<dbReference type="GO" id="GO:0051607">
    <property type="term" value="P:defense response to virus"/>
    <property type="evidence" value="ECO:0000303"/>
    <property type="project" value="ComplexPortal"/>
</dbReference>
<dbReference type="GO" id="GO:0060337">
    <property type="term" value="P:type I interferon-mediated signaling pathway"/>
    <property type="evidence" value="ECO:0000303"/>
    <property type="project" value="ComplexPortal"/>
</dbReference>
<dbReference type="InterPro" id="IPR041641">
    <property type="entry name" value="CALCOCO1/2_Zn_UBZ1"/>
</dbReference>
<dbReference type="InterPro" id="IPR024581">
    <property type="entry name" value="TBD"/>
</dbReference>
<dbReference type="InterPro" id="IPR051891">
    <property type="entry name" value="TBK1-IKBKE_adapters"/>
</dbReference>
<dbReference type="PANTHER" id="PTHR14432">
    <property type="entry name" value="PROSAPIP2 PROTEIN/5-AZACYTIDINE INDUCED GENE 2"/>
    <property type="match status" value="1"/>
</dbReference>
<dbReference type="PANTHER" id="PTHR14432:SF2">
    <property type="entry name" value="TANK-BINDING KINASE 1-BINDING PROTEIN 1"/>
    <property type="match status" value="1"/>
</dbReference>
<dbReference type="Pfam" id="PF12845">
    <property type="entry name" value="TBD"/>
    <property type="match status" value="1"/>
</dbReference>
<dbReference type="PROSITE" id="PS51905">
    <property type="entry name" value="ZF_UBZ1"/>
    <property type="match status" value="1"/>
</dbReference>
<name>TBKB1_HUMAN</name>